<proteinExistence type="inferred from homology"/>
<reference key="1">
    <citation type="journal article" date="2007" name="J. Bacteriol.">
        <title>The genome sequence of avian pathogenic Escherichia coli strain O1:K1:H7 shares strong similarities with human extraintestinal pathogenic E. coli genomes.</title>
        <authorList>
            <person name="Johnson T.J."/>
            <person name="Kariyawasam S."/>
            <person name="Wannemuehler Y."/>
            <person name="Mangiamele P."/>
            <person name="Johnson S.J."/>
            <person name="Doetkott C."/>
            <person name="Skyberg J.A."/>
            <person name="Lynne A.M."/>
            <person name="Johnson J.R."/>
            <person name="Nolan L.K."/>
        </authorList>
    </citation>
    <scope>NUCLEOTIDE SEQUENCE [LARGE SCALE GENOMIC DNA]</scope>
</reference>
<dbReference type="EMBL" id="CP000468">
    <property type="protein sequence ID" value="ABJ02663.1"/>
    <property type="molecule type" value="Genomic_DNA"/>
</dbReference>
<dbReference type="RefSeq" id="WP_000133040.1">
    <property type="nucleotide sequence ID" value="NZ_CADILS010000003.1"/>
</dbReference>
<dbReference type="BMRB" id="A1AG73"/>
<dbReference type="SMR" id="A1AG73"/>
<dbReference type="KEGG" id="ecv:APECO1_3262"/>
<dbReference type="HOGENOM" id="CLU_006301_6_3_6"/>
<dbReference type="Proteomes" id="UP000008216">
    <property type="component" value="Chromosome"/>
</dbReference>
<dbReference type="GO" id="GO:0005829">
    <property type="term" value="C:cytosol"/>
    <property type="evidence" value="ECO:0007669"/>
    <property type="project" value="TreeGrafter"/>
</dbReference>
<dbReference type="GO" id="GO:0005525">
    <property type="term" value="F:GTP binding"/>
    <property type="evidence" value="ECO:0007669"/>
    <property type="project" value="UniProtKB-KW"/>
</dbReference>
<dbReference type="GO" id="GO:0003924">
    <property type="term" value="F:GTPase activity"/>
    <property type="evidence" value="ECO:0007669"/>
    <property type="project" value="UniProtKB-UniRule"/>
</dbReference>
<dbReference type="GO" id="GO:0097216">
    <property type="term" value="F:guanosine tetraphosphate binding"/>
    <property type="evidence" value="ECO:0007669"/>
    <property type="project" value="UniProtKB-ARBA"/>
</dbReference>
<dbReference type="GO" id="GO:0003743">
    <property type="term" value="F:translation initiation factor activity"/>
    <property type="evidence" value="ECO:0007669"/>
    <property type="project" value="UniProtKB-UniRule"/>
</dbReference>
<dbReference type="CDD" id="cd01887">
    <property type="entry name" value="IF2_eIF5B"/>
    <property type="match status" value="1"/>
</dbReference>
<dbReference type="CDD" id="cd03702">
    <property type="entry name" value="IF2_mtIF2_II"/>
    <property type="match status" value="1"/>
</dbReference>
<dbReference type="CDD" id="cd03692">
    <property type="entry name" value="mtIF2_IVc"/>
    <property type="match status" value="1"/>
</dbReference>
<dbReference type="FunFam" id="2.40.30.10:FF:000007">
    <property type="entry name" value="Translation initiation factor IF-2"/>
    <property type="match status" value="1"/>
</dbReference>
<dbReference type="FunFam" id="2.40.30.10:FF:000008">
    <property type="entry name" value="Translation initiation factor IF-2"/>
    <property type="match status" value="1"/>
</dbReference>
<dbReference type="FunFam" id="3.30.56.50:FF:000001">
    <property type="entry name" value="Translation initiation factor IF-2"/>
    <property type="match status" value="1"/>
</dbReference>
<dbReference type="FunFam" id="3.40.50.10050:FF:000001">
    <property type="entry name" value="Translation initiation factor IF-2"/>
    <property type="match status" value="1"/>
</dbReference>
<dbReference type="FunFam" id="3.40.50.300:FF:000019">
    <property type="entry name" value="Translation initiation factor IF-2"/>
    <property type="match status" value="1"/>
</dbReference>
<dbReference type="Gene3D" id="3.40.50.300">
    <property type="entry name" value="P-loop containing nucleotide triphosphate hydrolases"/>
    <property type="match status" value="1"/>
</dbReference>
<dbReference type="Gene3D" id="3.30.56.50">
    <property type="entry name" value="Putative DNA-binding domain, N-terminal subdomain of bacterial translation initiation factor IF2"/>
    <property type="match status" value="1"/>
</dbReference>
<dbReference type="Gene3D" id="2.40.30.10">
    <property type="entry name" value="Translation factors"/>
    <property type="match status" value="2"/>
</dbReference>
<dbReference type="Gene3D" id="3.40.50.10050">
    <property type="entry name" value="Translation initiation factor IF- 2, domain 3"/>
    <property type="match status" value="1"/>
</dbReference>
<dbReference type="HAMAP" id="MF_00100_B">
    <property type="entry name" value="IF_2_B"/>
    <property type="match status" value="1"/>
</dbReference>
<dbReference type="InterPro" id="IPR009061">
    <property type="entry name" value="DNA-bd_dom_put_sf"/>
</dbReference>
<dbReference type="InterPro" id="IPR053905">
    <property type="entry name" value="EF-G-like_DII"/>
</dbReference>
<dbReference type="InterPro" id="IPR004161">
    <property type="entry name" value="EFTu-like_2"/>
</dbReference>
<dbReference type="InterPro" id="IPR013575">
    <property type="entry name" value="IF2_assoc_dom_bac"/>
</dbReference>
<dbReference type="InterPro" id="IPR044145">
    <property type="entry name" value="IF2_II"/>
</dbReference>
<dbReference type="InterPro" id="IPR006847">
    <property type="entry name" value="IF2_N"/>
</dbReference>
<dbReference type="InterPro" id="IPR027417">
    <property type="entry name" value="P-loop_NTPase"/>
</dbReference>
<dbReference type="InterPro" id="IPR005225">
    <property type="entry name" value="Small_GTP-bd"/>
</dbReference>
<dbReference type="InterPro" id="IPR000795">
    <property type="entry name" value="T_Tr_GTP-bd_dom"/>
</dbReference>
<dbReference type="InterPro" id="IPR000178">
    <property type="entry name" value="TF_IF2_bacterial-like"/>
</dbReference>
<dbReference type="InterPro" id="IPR015760">
    <property type="entry name" value="TIF_IF2"/>
</dbReference>
<dbReference type="InterPro" id="IPR023115">
    <property type="entry name" value="TIF_IF2_dom3"/>
</dbReference>
<dbReference type="InterPro" id="IPR036925">
    <property type="entry name" value="TIF_IF2_dom3_sf"/>
</dbReference>
<dbReference type="InterPro" id="IPR009000">
    <property type="entry name" value="Transl_B-barrel_sf"/>
</dbReference>
<dbReference type="NCBIfam" id="TIGR00487">
    <property type="entry name" value="IF-2"/>
    <property type="match status" value="1"/>
</dbReference>
<dbReference type="NCBIfam" id="TIGR00231">
    <property type="entry name" value="small_GTP"/>
    <property type="match status" value="1"/>
</dbReference>
<dbReference type="PANTHER" id="PTHR43381:SF5">
    <property type="entry name" value="TR-TYPE G DOMAIN-CONTAINING PROTEIN"/>
    <property type="match status" value="1"/>
</dbReference>
<dbReference type="PANTHER" id="PTHR43381">
    <property type="entry name" value="TRANSLATION INITIATION FACTOR IF-2-RELATED"/>
    <property type="match status" value="1"/>
</dbReference>
<dbReference type="Pfam" id="PF22042">
    <property type="entry name" value="EF-G_D2"/>
    <property type="match status" value="1"/>
</dbReference>
<dbReference type="Pfam" id="PF00009">
    <property type="entry name" value="GTP_EFTU"/>
    <property type="match status" value="1"/>
</dbReference>
<dbReference type="Pfam" id="PF03144">
    <property type="entry name" value="GTP_EFTU_D2"/>
    <property type="match status" value="1"/>
</dbReference>
<dbReference type="Pfam" id="PF11987">
    <property type="entry name" value="IF-2"/>
    <property type="match status" value="1"/>
</dbReference>
<dbReference type="Pfam" id="PF08364">
    <property type="entry name" value="IF2_assoc"/>
    <property type="match status" value="1"/>
</dbReference>
<dbReference type="Pfam" id="PF04760">
    <property type="entry name" value="IF2_N"/>
    <property type="match status" value="2"/>
</dbReference>
<dbReference type="SUPFAM" id="SSF52156">
    <property type="entry name" value="Initiation factor IF2/eIF5b, domain 3"/>
    <property type="match status" value="1"/>
</dbReference>
<dbReference type="SUPFAM" id="SSF52540">
    <property type="entry name" value="P-loop containing nucleoside triphosphate hydrolases"/>
    <property type="match status" value="1"/>
</dbReference>
<dbReference type="SUPFAM" id="SSF46955">
    <property type="entry name" value="Putative DNA-binding domain"/>
    <property type="match status" value="1"/>
</dbReference>
<dbReference type="SUPFAM" id="SSF50447">
    <property type="entry name" value="Translation proteins"/>
    <property type="match status" value="2"/>
</dbReference>
<dbReference type="PROSITE" id="PS51722">
    <property type="entry name" value="G_TR_2"/>
    <property type="match status" value="1"/>
</dbReference>
<dbReference type="PROSITE" id="PS01176">
    <property type="entry name" value="IF2"/>
    <property type="match status" value="1"/>
</dbReference>
<name>IF2_ECOK1</name>
<keyword id="KW-0007">Acetylation</keyword>
<keyword id="KW-0963">Cytoplasm</keyword>
<keyword id="KW-0342">GTP-binding</keyword>
<keyword id="KW-0396">Initiation factor</keyword>
<keyword id="KW-0547">Nucleotide-binding</keyword>
<keyword id="KW-0648">Protein biosynthesis</keyword>
<keyword id="KW-1185">Reference proteome</keyword>
<protein>
    <recommendedName>
        <fullName evidence="2">Translation initiation factor IF-2</fullName>
    </recommendedName>
</protein>
<gene>
    <name evidence="2" type="primary">infB</name>
    <name type="ordered locus">Ecok1_31690</name>
    <name type="ORF">APECO1_3262</name>
</gene>
<organism>
    <name type="scientific">Escherichia coli O1:K1 / APEC</name>
    <dbReference type="NCBI Taxonomy" id="405955"/>
    <lineage>
        <taxon>Bacteria</taxon>
        <taxon>Pseudomonadati</taxon>
        <taxon>Pseudomonadota</taxon>
        <taxon>Gammaproteobacteria</taxon>
        <taxon>Enterobacterales</taxon>
        <taxon>Enterobacteriaceae</taxon>
        <taxon>Escherichia</taxon>
    </lineage>
</organism>
<evidence type="ECO:0000250" key="1"/>
<evidence type="ECO:0000255" key="2">
    <source>
        <dbReference type="HAMAP-Rule" id="MF_00100"/>
    </source>
</evidence>
<evidence type="ECO:0000256" key="3">
    <source>
        <dbReference type="SAM" id="MobiDB-lite"/>
    </source>
</evidence>
<accession>A1AG73</accession>
<comment type="function">
    <text evidence="2">One of the essential components for the initiation of protein synthesis. Protects formylmethionyl-tRNA from spontaneous hydrolysis and promotes its binding to the 30S ribosomal subunits. Also involved in the hydrolysis of GTP during the formation of the 70S ribosomal complex.</text>
</comment>
<comment type="subcellular location">
    <subcellularLocation>
        <location evidence="2">Cytoplasm</location>
    </subcellularLocation>
</comment>
<comment type="similarity">
    <text evidence="2">Belongs to the TRAFAC class translation factor GTPase superfamily. Classic translation factor GTPase family. IF-2 subfamily.</text>
</comment>
<sequence>MTDVTIKTLAAERQTSVERLVQQFADAGIRKSADDSVSAQEKQTLIDHLNQKNSGPDKLTLQRKTRSTLNIPGTGGKSKSVQIEVRKKRTFVKRDPQEAERLAAEEQAQREAEEQARREAEESAKREAQQKAEREAAEQAKREAAEQAKREAAEKDKVSNQQDDMTKNAQAEKARREQEAAELKRKAEEEARRKLEEEARRVAEEARRMAEENKWTDNAEPTEDSSDYHVTTSQHARQAEDESDREVEGGRGRGRNAKAARPKKGNKHAESKADREEARAAVRGGKGGKRKGSSLQQGFQKPAQAVNRDVVIGETITVGELANKMAVKGSQVIKAMMKLGAMATINQVIDQETAQLVAEEMGHKVILRRENELEEAVMSDRDTGAAAEPRAPVVTIMGHVDHGKTSLLDYIRSTKVASGEAGGITQHIGAYHVETENGMITFLDTPGHAAFTSMRARGAQATDIVVLVVAADDGVMPQTIEAIQHAKAAGVPVVVAVNKIDKPEADPDRVKNELSQYGILPEEWGGESQFVHVSAKAGTGIDELLDAILLQAEVLELKAVRKGMASGAVIESFLDKGRGPVATVLVREGTLHKGDIVLCGFEYGRVRAMRNELGQEVLEAGPSIPVEILGLSGVPAAGDEVTVVRDEKKAREVALYRQGKFREVKLARQQKSKLENMFANMTEGEVHEVNIVLKADVQGSVEAISDSLLKLSTDEVKVKIIGSGVGGITETDATLAAASNAILVGFNVRADASARKVIEAESLDLRYYSVIYNLIDEVKAAMSGMLSPELKQQIIGLAEVRDVFKSPKFGAIAGCMVTEGVVKRHNPIRVLRDNVVIYEGELESLRRFKDDVNEVRNGMECGIGVKNYNDVRTGDVIEVFEIIEIQRTIA</sequence>
<feature type="chain" id="PRO_1000008238" description="Translation initiation factor IF-2">
    <location>
        <begin position="1"/>
        <end position="890"/>
    </location>
</feature>
<feature type="domain" description="tr-type G">
    <location>
        <begin position="389"/>
        <end position="558"/>
    </location>
</feature>
<feature type="region of interest" description="Disordered" evidence="3">
    <location>
        <begin position="45"/>
        <end position="304"/>
    </location>
</feature>
<feature type="region of interest" description="G1" evidence="1">
    <location>
        <begin position="398"/>
        <end position="405"/>
    </location>
</feature>
<feature type="region of interest" description="G2" evidence="1">
    <location>
        <begin position="423"/>
        <end position="427"/>
    </location>
</feature>
<feature type="region of interest" description="G3" evidence="1">
    <location>
        <begin position="444"/>
        <end position="447"/>
    </location>
</feature>
<feature type="region of interest" description="G4" evidence="1">
    <location>
        <begin position="498"/>
        <end position="501"/>
    </location>
</feature>
<feature type="region of interest" description="G5" evidence="1">
    <location>
        <begin position="534"/>
        <end position="536"/>
    </location>
</feature>
<feature type="compositionally biased region" description="Polar residues" evidence="3">
    <location>
        <begin position="67"/>
        <end position="81"/>
    </location>
</feature>
<feature type="compositionally biased region" description="Basic and acidic residues" evidence="3">
    <location>
        <begin position="92"/>
        <end position="217"/>
    </location>
</feature>
<feature type="compositionally biased region" description="Basic residues" evidence="3">
    <location>
        <begin position="252"/>
        <end position="266"/>
    </location>
</feature>
<feature type="compositionally biased region" description="Basic and acidic residues" evidence="3">
    <location>
        <begin position="267"/>
        <end position="280"/>
    </location>
</feature>
<feature type="binding site" evidence="2">
    <location>
        <begin position="398"/>
        <end position="405"/>
    </location>
    <ligand>
        <name>GTP</name>
        <dbReference type="ChEBI" id="CHEBI:37565"/>
    </ligand>
</feature>
<feature type="binding site" evidence="2">
    <location>
        <begin position="444"/>
        <end position="448"/>
    </location>
    <ligand>
        <name>GTP</name>
        <dbReference type="ChEBI" id="CHEBI:37565"/>
    </ligand>
</feature>
<feature type="binding site" evidence="2">
    <location>
        <begin position="498"/>
        <end position="501"/>
    </location>
    <ligand>
        <name>GTP</name>
        <dbReference type="ChEBI" id="CHEBI:37565"/>
    </ligand>
</feature>
<feature type="modified residue" description="N6-acetyllysine" evidence="1">
    <location>
        <position position="808"/>
    </location>
</feature>